<feature type="chain" id="PRO_0000443295" description="Endothelin-converting enzyme 2">
    <location>
        <begin position="1"/>
        <end position="765"/>
    </location>
</feature>
<feature type="topological domain" description="Cytoplasmic" evidence="9">
    <location>
        <begin position="1"/>
        <end position="60"/>
    </location>
</feature>
<feature type="transmembrane region" description="Helical; Signal-anchor for type II membrane protein" evidence="9">
    <location>
        <begin position="61"/>
        <end position="81"/>
    </location>
</feature>
<feature type="topological domain" description="Lumenal" evidence="9">
    <location>
        <begin position="82"/>
        <end position="765"/>
    </location>
</feature>
<feature type="domain" description="Peptidase M13" evidence="5">
    <location>
        <begin position="93"/>
        <end position="765"/>
    </location>
</feature>
<feature type="active site" evidence="5 6">
    <location>
        <position position="603"/>
    </location>
</feature>
<feature type="active site" description="Proton donor" evidence="5">
    <location>
        <position position="666"/>
    </location>
</feature>
<feature type="binding site" evidence="5 6">
    <location>
        <position position="602"/>
    </location>
    <ligand>
        <name>Zn(2+)</name>
        <dbReference type="ChEBI" id="CHEBI:29105"/>
        <note>catalytic</note>
    </ligand>
</feature>
<feature type="binding site" evidence="5 6">
    <location>
        <position position="606"/>
    </location>
    <ligand>
        <name>Zn(2+)</name>
        <dbReference type="ChEBI" id="CHEBI:29105"/>
        <note>catalytic</note>
    </ligand>
</feature>
<feature type="binding site" evidence="5">
    <location>
        <position position="662"/>
    </location>
    <ligand>
        <name>Zn(2+)</name>
        <dbReference type="ChEBI" id="CHEBI:29105"/>
        <note>catalytic</note>
    </ligand>
</feature>
<feature type="glycosylation site" description="N-linked (GlcNAc...) asparagine" evidence="4">
    <location>
        <position position="161"/>
    </location>
</feature>
<feature type="glycosylation site" description="N-linked (GlcNAc...) asparagine" evidence="4">
    <location>
        <position position="165"/>
    </location>
</feature>
<feature type="glycosylation site" description="N-linked (GlcNAc...) asparagine" evidence="4">
    <location>
        <position position="206"/>
    </location>
</feature>
<feature type="glycosylation site" description="N-linked (GlcNAc...) asparagine" evidence="4">
    <location>
        <position position="266"/>
    </location>
</feature>
<feature type="glycosylation site" description="N-linked (GlcNAc...) asparagine" evidence="4">
    <location>
        <position position="311"/>
    </location>
</feature>
<feature type="glycosylation site" description="N-linked (GlcNAc...) asparagine" evidence="4">
    <location>
        <position position="378"/>
    </location>
</feature>
<feature type="glycosylation site" description="N-linked (GlcNAc...) asparagine" evidence="4">
    <location>
        <position position="534"/>
    </location>
</feature>
<feature type="glycosylation site" description="N-linked (GlcNAc...) asparagine" evidence="4">
    <location>
        <position position="627"/>
    </location>
</feature>
<feature type="glycosylation site" description="N-linked (GlcNAc...) asparagine" evidence="4">
    <location>
        <position position="635"/>
    </location>
</feature>
<feature type="disulfide bond" evidence="5">
    <location>
        <begin position="94"/>
        <end position="99"/>
    </location>
</feature>
<feature type="disulfide bond" evidence="5">
    <location>
        <begin position="117"/>
        <end position="750"/>
    </location>
</feature>
<feature type="disulfide bond" evidence="5">
    <location>
        <begin position="125"/>
        <end position="710"/>
    </location>
</feature>
<feature type="disulfide bond" evidence="5">
    <location>
        <begin position="181"/>
        <end position="430"/>
    </location>
</feature>
<feature type="disulfide bond" evidence="5">
    <location>
        <begin position="639"/>
        <end position="762"/>
    </location>
</feature>
<feature type="splice variant" id="VSP_059327" description="In isoform ECE2-2.">
    <location>
        <begin position="14"/>
        <end position="42"/>
    </location>
</feature>
<feature type="sequence conflict" description="In Ref. 1; AAO72363/AAO72362." evidence="9" ref="1">
    <original>S</original>
    <variation>R</variation>
    <location>
        <position position="2"/>
    </location>
</feature>
<feature type="sequence conflict" description="In Ref. 1; AAO72363/AAO72362." evidence="9" ref="1">
    <original>TF</original>
    <variation>NS</variation>
    <location>
        <begin position="143"/>
        <end position="144"/>
    </location>
</feature>
<feature type="sequence conflict" description="In Ref. 1; AAO72363/AAO72362." evidence="9" ref="1">
    <original>QP</original>
    <variation>HA</variation>
    <location>
        <begin position="193"/>
        <end position="194"/>
    </location>
</feature>
<feature type="sequence conflict" description="In Ref. 1; AAO72363/AAO72362." evidence="9" ref="1">
    <original>A</original>
    <variation>V</variation>
    <location>
        <position position="468"/>
    </location>
</feature>
<feature type="sequence conflict" description="In Ref. 1; AAO72363/AAO72362." evidence="9" ref="1">
    <original>K</original>
    <variation>Q</variation>
    <location>
        <position position="589"/>
    </location>
</feature>
<proteinExistence type="evidence at transcript level"/>
<comment type="function">
    <text evidence="2 3">Converts big endothelin-1 to endothelin-1. Also involved in the processing of various neuroendocrine peptides, including neurotensin, angiotensin I, substance P, proenkephalin-derived peptides, and prodynorphin-derived peptides (By similarity). May play a role in amyloid-beta processing (By similarity).</text>
</comment>
<comment type="catalytic activity">
    <reaction evidence="3">
        <text>Hydrolysis of the 21-Trp-|-Val-22 bond in big endothelin to form endothelin 1.</text>
        <dbReference type="EC" id="3.4.24.71"/>
    </reaction>
</comment>
<comment type="cofactor">
    <cofactor evidence="1">
        <name>Zn(2+)</name>
        <dbReference type="ChEBI" id="CHEBI:29105"/>
    </cofactor>
    <text evidence="1">Binds 1 zinc ion per subunit.</text>
</comment>
<comment type="subcellular location">
    <subcellularLocation>
        <location evidence="7">Golgi apparatus membrane</location>
        <topology evidence="9">Single-pass type II membrane protein</topology>
    </subcellularLocation>
    <subcellularLocation>
        <location evidence="7">Cytoplasmic vesicle</location>
        <location evidence="7">Secretory vesicle membrane</location>
    </subcellularLocation>
</comment>
<comment type="alternative products">
    <event type="alternative splicing"/>
    <isoform>
        <id>F1N476-1</id>
        <id>Q10711-4</id>
        <name>ECE2-1</name>
        <name evidence="8">ECE-2b-2</name>
        <sequence type="displayed"/>
    </isoform>
    <isoform>
        <id>F1N476-2</id>
        <id>Q10711-3</id>
        <name>ECE2-2</name>
        <name evidence="8">ECE-2b-1</name>
        <sequence type="described" ref="VSP_059327"/>
    </isoform>
    <isoform>
        <id>P0DPE2-1</id>
        <id>Q10711-1</id>
        <name>EEF1AKMT4-ECE2-1</name>
        <name>ECE-2a-1</name>
        <sequence type="external"/>
    </isoform>
    <isoform>
        <id>P0DPE2-2</id>
        <id>Q10711-2</id>
        <name>EEF1AKMT4-ECE2-2</name>
        <name>ECE-2a-2</name>
        <sequence type="external"/>
    </isoform>
</comment>
<comment type="tissue specificity">
    <text evidence="7">Isoform ECE2-1 and isoform ECE2-2 are expressed in brain and adrenal gland.</text>
</comment>
<comment type="similarity">
    <text evidence="5 9">Belongs to the peptidase M13 family.</text>
</comment>
<evidence type="ECO:0000250" key="1"/>
<evidence type="ECO:0000250" key="2">
    <source>
        <dbReference type="UniProtKB" id="B2RQR8"/>
    </source>
</evidence>
<evidence type="ECO:0000250" key="3">
    <source>
        <dbReference type="UniProtKB" id="P0DPD6"/>
    </source>
</evidence>
<evidence type="ECO:0000255" key="4"/>
<evidence type="ECO:0000255" key="5">
    <source>
        <dbReference type="PROSITE-ProRule" id="PRU01233"/>
    </source>
</evidence>
<evidence type="ECO:0000255" key="6">
    <source>
        <dbReference type="PROSITE-ProRule" id="PRU10095"/>
    </source>
</evidence>
<evidence type="ECO:0000269" key="7">
    <source>
    </source>
</evidence>
<evidence type="ECO:0000303" key="8">
    <source>
    </source>
</evidence>
<evidence type="ECO:0000305" key="9"/>
<organism>
    <name type="scientific">Bos taurus</name>
    <name type="common">Bovine</name>
    <dbReference type="NCBI Taxonomy" id="9913"/>
    <lineage>
        <taxon>Eukaryota</taxon>
        <taxon>Metazoa</taxon>
        <taxon>Chordata</taxon>
        <taxon>Craniata</taxon>
        <taxon>Vertebrata</taxon>
        <taxon>Euteleostomi</taxon>
        <taxon>Mammalia</taxon>
        <taxon>Eutheria</taxon>
        <taxon>Laurasiatheria</taxon>
        <taxon>Artiodactyla</taxon>
        <taxon>Ruminantia</taxon>
        <taxon>Pecora</taxon>
        <taxon>Bovidae</taxon>
        <taxon>Bovinae</taxon>
        <taxon>Bos</taxon>
    </lineage>
</organism>
<protein>
    <recommendedName>
        <fullName evidence="3">Endothelin-converting enzyme 2</fullName>
        <shortName>ECE-2</shortName>
        <ecNumber evidence="3">3.4.24.71</ecNumber>
    </recommendedName>
</protein>
<name>ECE2_BOVIN</name>
<dbReference type="EC" id="3.4.24.71" evidence="3"/>
<dbReference type="EMBL" id="AF489575">
    <property type="protein sequence ID" value="AAO72362.1"/>
    <property type="molecule type" value="mRNA"/>
</dbReference>
<dbReference type="EMBL" id="AF489576">
    <property type="protein sequence ID" value="AAO72363.1"/>
    <property type="molecule type" value="mRNA"/>
</dbReference>
<dbReference type="EMBL" id="DAAA02001884">
    <property type="status" value="NOT_ANNOTATED_CDS"/>
    <property type="molecule type" value="Genomic_DNA"/>
</dbReference>
<dbReference type="RefSeq" id="NP_808872.2">
    <molecule id="F1N476-2"/>
    <property type="nucleotide sequence ID" value="NM_177957.3"/>
</dbReference>
<dbReference type="RefSeq" id="NP_808873.2">
    <molecule id="F1N476-1"/>
    <property type="nucleotide sequence ID" value="NM_177958.3"/>
</dbReference>
<dbReference type="SMR" id="F1N476"/>
<dbReference type="FunCoup" id="F1N476">
    <property type="interactions" value="26"/>
</dbReference>
<dbReference type="STRING" id="9913.ENSBTAP00000007435"/>
<dbReference type="MEROPS" id="M13.003"/>
<dbReference type="GlyCosmos" id="F1N476">
    <property type="glycosylation" value="9 sites, No reported glycans"/>
</dbReference>
<dbReference type="GlyGen" id="F1N476">
    <property type="glycosylation" value="9 sites"/>
</dbReference>
<dbReference type="GeneID" id="281134"/>
<dbReference type="CTD" id="9718"/>
<dbReference type="VEuPathDB" id="HostDB:ENSBTAG00000005658"/>
<dbReference type="InParanoid" id="F1N476"/>
<dbReference type="OMA" id="FGWAQVW"/>
<dbReference type="OrthoDB" id="6475849at2759"/>
<dbReference type="Reactome" id="R-BTA-375276">
    <property type="pathway name" value="Peptide ligand-binding receptors"/>
</dbReference>
<dbReference type="Proteomes" id="UP000009136">
    <property type="component" value="Chromosome 1"/>
</dbReference>
<dbReference type="Bgee" id="ENSBTAG00000005658">
    <property type="expression patterns" value="Expressed in adenohypophysis and 96 other cell types or tissues"/>
</dbReference>
<dbReference type="GO" id="GO:0030659">
    <property type="term" value="C:cytoplasmic vesicle membrane"/>
    <property type="evidence" value="ECO:0000250"/>
    <property type="project" value="UniProtKB"/>
</dbReference>
<dbReference type="GO" id="GO:0000139">
    <property type="term" value="C:Golgi membrane"/>
    <property type="evidence" value="ECO:0000314"/>
    <property type="project" value="UniProtKB"/>
</dbReference>
<dbReference type="GO" id="GO:0005886">
    <property type="term" value="C:plasma membrane"/>
    <property type="evidence" value="ECO:0000318"/>
    <property type="project" value="GO_Central"/>
</dbReference>
<dbReference type="GO" id="GO:0030658">
    <property type="term" value="C:transport vesicle membrane"/>
    <property type="evidence" value="ECO:0000314"/>
    <property type="project" value="UniProtKB"/>
</dbReference>
<dbReference type="GO" id="GO:0046872">
    <property type="term" value="F:metal ion binding"/>
    <property type="evidence" value="ECO:0007669"/>
    <property type="project" value="UniProtKB-KW"/>
</dbReference>
<dbReference type="GO" id="GO:0004222">
    <property type="term" value="F:metalloendopeptidase activity"/>
    <property type="evidence" value="ECO:0000250"/>
    <property type="project" value="UniProtKB"/>
</dbReference>
<dbReference type="GO" id="GO:0007420">
    <property type="term" value="P:brain development"/>
    <property type="evidence" value="ECO:0000250"/>
    <property type="project" value="UniProtKB"/>
</dbReference>
<dbReference type="GO" id="GO:0010002">
    <property type="term" value="P:cardioblast differentiation"/>
    <property type="evidence" value="ECO:0000250"/>
    <property type="project" value="UniProtKB"/>
</dbReference>
<dbReference type="GO" id="GO:0007507">
    <property type="term" value="P:heart development"/>
    <property type="evidence" value="ECO:0000250"/>
    <property type="project" value="UniProtKB"/>
</dbReference>
<dbReference type="GO" id="GO:0016486">
    <property type="term" value="P:peptide hormone processing"/>
    <property type="evidence" value="ECO:0000250"/>
    <property type="project" value="UniProtKB"/>
</dbReference>
<dbReference type="GO" id="GO:0016485">
    <property type="term" value="P:protein processing"/>
    <property type="evidence" value="ECO:0000318"/>
    <property type="project" value="GO_Central"/>
</dbReference>
<dbReference type="CDD" id="cd08662">
    <property type="entry name" value="M13"/>
    <property type="match status" value="1"/>
</dbReference>
<dbReference type="FunFam" id="1.10.1380.10:FF:000001">
    <property type="entry name" value="endothelin-converting enzyme 2 isoform X1"/>
    <property type="match status" value="1"/>
</dbReference>
<dbReference type="Gene3D" id="3.40.390.10">
    <property type="entry name" value="Collagenase (Catalytic Domain)"/>
    <property type="match status" value="1"/>
</dbReference>
<dbReference type="Gene3D" id="1.10.1380.10">
    <property type="entry name" value="Neutral endopeptidase , domain2"/>
    <property type="match status" value="1"/>
</dbReference>
<dbReference type="InterPro" id="IPR024079">
    <property type="entry name" value="MetalloPept_cat_dom_sf"/>
</dbReference>
<dbReference type="InterPro" id="IPR000718">
    <property type="entry name" value="Peptidase_M13"/>
</dbReference>
<dbReference type="InterPro" id="IPR018497">
    <property type="entry name" value="Peptidase_M13_C"/>
</dbReference>
<dbReference type="InterPro" id="IPR042089">
    <property type="entry name" value="Peptidase_M13_dom_2"/>
</dbReference>
<dbReference type="InterPro" id="IPR008753">
    <property type="entry name" value="Peptidase_M13_N"/>
</dbReference>
<dbReference type="PANTHER" id="PTHR11733:SF127">
    <property type="entry name" value="EEF1AKMT4-ECE2 READTHROUGH TRANSCRIPT PROTEIN-RELATED"/>
    <property type="match status" value="1"/>
</dbReference>
<dbReference type="PANTHER" id="PTHR11733">
    <property type="entry name" value="ZINC METALLOPROTEASE FAMILY M13 NEPRILYSIN-RELATED"/>
    <property type="match status" value="1"/>
</dbReference>
<dbReference type="Pfam" id="PF01431">
    <property type="entry name" value="Peptidase_M13"/>
    <property type="match status" value="1"/>
</dbReference>
<dbReference type="Pfam" id="PF05649">
    <property type="entry name" value="Peptidase_M13_N"/>
    <property type="match status" value="1"/>
</dbReference>
<dbReference type="PRINTS" id="PR00786">
    <property type="entry name" value="NEPRILYSIN"/>
</dbReference>
<dbReference type="SUPFAM" id="SSF55486">
    <property type="entry name" value="Metalloproteases ('zincins'), catalytic domain"/>
    <property type="match status" value="1"/>
</dbReference>
<dbReference type="PROSITE" id="PS51885">
    <property type="entry name" value="NEPRILYSIN"/>
    <property type="match status" value="1"/>
</dbReference>
<dbReference type="PROSITE" id="PS00142">
    <property type="entry name" value="ZINC_PROTEASE"/>
    <property type="match status" value="1"/>
</dbReference>
<keyword id="KW-0025">Alternative splicing</keyword>
<keyword id="KW-0968">Cytoplasmic vesicle</keyword>
<keyword id="KW-1015">Disulfide bond</keyword>
<keyword id="KW-0325">Glycoprotein</keyword>
<keyword id="KW-0333">Golgi apparatus</keyword>
<keyword id="KW-0378">Hydrolase</keyword>
<keyword id="KW-0472">Membrane</keyword>
<keyword id="KW-0479">Metal-binding</keyword>
<keyword id="KW-0482">Metalloprotease</keyword>
<keyword id="KW-0645">Protease</keyword>
<keyword id="KW-1185">Reference proteome</keyword>
<keyword id="KW-0735">Signal-anchor</keyword>
<keyword id="KW-0812">Transmembrane</keyword>
<keyword id="KW-1133">Transmembrane helix</keyword>
<keyword id="KW-0862">Zinc</keyword>
<accession>F1N476</accession>
<accession>Q865C2</accession>
<accession>Q865C3</accession>
<gene>
    <name evidence="3" type="primary">ECE2</name>
</gene>
<sequence length="765" mass="86211">MSVALQELGGGGNMVEYKRATLRDEDAPETPVEGGASPDAVEAGFRKRTSRLLGLHTQLELVLAGVSLLLAALLLGCLVALGVQYHRDPSHSTCLTEACIRVAGKILESLDRGVSPCEDFYQFSCGGWIRRNPLPDGRSRWNTFNSLWDQNQAILKHLLENTTFNSSSEAERKTQRFYLSCLQVERIEELGAQPLRDLIDKIGGWNVTGPWDQDNFMEVLKAVAGTYRATPFFTVYVSADSKSSNSNIIQVDQSGLFLPSRDYYLNRTANEKVLTAYLDYMEELGMLLGGQPTSTREQMRQVLELEIQLANITVPQDQRRDEEKIYHKMSIAELQALAPSMDWLEFLSFLLSPLELGDSEPVVVYGTDYLQQVSELINRTEPSVLNNYLIWNLVQKTTSSLDHRFESAQEKLLETLYGTKKSCTPRWQTCISNTDDALGFALGSLFVKATFDRQSKEIAEGMISEIRAAFEEALGHLVWMDEKTRQAAKEKADAIYDMIGFPDFILEPKELDDVYDGYEVSEDSFFQNMLNLYNFSAKVMADQLRKPPSRDQWSMTPQTVNAYYLPTKNEIVFPAGILQAPFYTCNHPKALNFGGIGVVMGHELTHAFDDQGREYDKEGNLRPWWQNESLAAFRNHTACIEEQYSQYQVNGEKLNGRQTLGENIADNGGLKAAYNAYKAWLRKHGEEQQLPAVGLTNHQLFFVGFAQVWCSVRTPESSHEGLVTDPHSPARFRVLGTLSNSRDFLRHFGCPVGSPMNSGQLCEVW</sequence>
<reference key="1">
    <citation type="journal article" date="2002" name="Biochem. Biophys. Res. Commun.">
        <title>Molecular isolation and characterization of novel four subisoforms of ECE-2.</title>
        <authorList>
            <person name="Ikeda S."/>
            <person name="Emoto N."/>
            <person name="Alimsardjono H."/>
            <person name="Yokoyama M."/>
            <person name="Matsuo M."/>
        </authorList>
    </citation>
    <scope>NUCLEOTIDE SEQUENCE [MRNA] (ISOFORMS ECE2-1 AND ECE2-2)</scope>
    <scope>TISSUE SPECIFICITY</scope>
    <scope>SUBCELLULAR LOCATION</scope>
    <scope>ALTERNATIVE SPLICING</scope>
</reference>
<reference key="2">
    <citation type="journal article" date="2009" name="Genome Biol.">
        <title>A whole-genome assembly of the domestic cow, Bos taurus.</title>
        <authorList>
            <person name="Zimin A.V."/>
            <person name="Delcher A.L."/>
            <person name="Florea L."/>
            <person name="Kelley D.R."/>
            <person name="Schatz M.C."/>
            <person name="Puiu D."/>
            <person name="Hanrahan F."/>
            <person name="Pertea G."/>
            <person name="Van Tassell C.P."/>
            <person name="Sonstegard T.S."/>
            <person name="Marcais G."/>
            <person name="Roberts M."/>
            <person name="Subramanian P."/>
            <person name="Yorke J.A."/>
            <person name="Salzberg S.L."/>
        </authorList>
    </citation>
    <scope>NUCLEOTIDE SEQUENCE [LARGE SCALE GENOMIC DNA]</scope>
    <source>
        <strain>Hereford</strain>
    </source>
</reference>